<feature type="chain" id="PRO_1000025686" description="Cell division protein FtsB">
    <location>
        <begin position="1"/>
        <end position="95"/>
    </location>
</feature>
<feature type="topological domain" description="Cytoplasmic" evidence="1">
    <location>
        <begin position="1"/>
        <end position="3"/>
    </location>
</feature>
<feature type="transmembrane region" description="Helical" evidence="1">
    <location>
        <begin position="4"/>
        <end position="21"/>
    </location>
</feature>
<feature type="topological domain" description="Periplasmic" evidence="1">
    <location>
        <begin position="22"/>
        <end position="95"/>
    </location>
</feature>
<feature type="coiled-coil region" evidence="1">
    <location>
        <begin position="26"/>
        <end position="76"/>
    </location>
</feature>
<protein>
    <recommendedName>
        <fullName evidence="1">Cell division protein FtsB</fullName>
    </recommendedName>
</protein>
<dbReference type="EMBL" id="CP000453">
    <property type="protein sequence ID" value="ABI57182.1"/>
    <property type="molecule type" value="Genomic_DNA"/>
</dbReference>
<dbReference type="RefSeq" id="WP_011629576.1">
    <property type="nucleotide sequence ID" value="NC_008340.1"/>
</dbReference>
<dbReference type="SMR" id="Q0A7K5"/>
<dbReference type="KEGG" id="aeh:Mlg_1838"/>
<dbReference type="eggNOG" id="COG2919">
    <property type="taxonomic scope" value="Bacteria"/>
</dbReference>
<dbReference type="HOGENOM" id="CLU_134863_5_2_6"/>
<dbReference type="OrthoDB" id="7061211at2"/>
<dbReference type="Proteomes" id="UP000001962">
    <property type="component" value="Chromosome"/>
</dbReference>
<dbReference type="GO" id="GO:0032153">
    <property type="term" value="C:cell division site"/>
    <property type="evidence" value="ECO:0007669"/>
    <property type="project" value="UniProtKB-UniRule"/>
</dbReference>
<dbReference type="GO" id="GO:0030428">
    <property type="term" value="C:cell septum"/>
    <property type="evidence" value="ECO:0007669"/>
    <property type="project" value="TreeGrafter"/>
</dbReference>
<dbReference type="GO" id="GO:0005886">
    <property type="term" value="C:plasma membrane"/>
    <property type="evidence" value="ECO:0007669"/>
    <property type="project" value="UniProtKB-SubCell"/>
</dbReference>
<dbReference type="GO" id="GO:0043093">
    <property type="term" value="P:FtsZ-dependent cytokinesis"/>
    <property type="evidence" value="ECO:0007669"/>
    <property type="project" value="UniProtKB-UniRule"/>
</dbReference>
<dbReference type="HAMAP" id="MF_00599">
    <property type="entry name" value="FtsB"/>
    <property type="match status" value="1"/>
</dbReference>
<dbReference type="InterPro" id="IPR023081">
    <property type="entry name" value="Cell_div_FtsB"/>
</dbReference>
<dbReference type="InterPro" id="IPR007060">
    <property type="entry name" value="FtsL/DivIC"/>
</dbReference>
<dbReference type="NCBIfam" id="NF002058">
    <property type="entry name" value="PRK00888.1"/>
    <property type="match status" value="1"/>
</dbReference>
<dbReference type="PANTHER" id="PTHR37485">
    <property type="entry name" value="CELL DIVISION PROTEIN FTSB"/>
    <property type="match status" value="1"/>
</dbReference>
<dbReference type="PANTHER" id="PTHR37485:SF1">
    <property type="entry name" value="CELL DIVISION PROTEIN FTSB"/>
    <property type="match status" value="1"/>
</dbReference>
<dbReference type="Pfam" id="PF04977">
    <property type="entry name" value="DivIC"/>
    <property type="match status" value="1"/>
</dbReference>
<reference key="1">
    <citation type="submission" date="2006-08" db="EMBL/GenBank/DDBJ databases">
        <title>Complete sequence of Alkalilimnicola ehrilichei MLHE-1.</title>
        <authorList>
            <person name="Copeland A."/>
            <person name="Lucas S."/>
            <person name="Lapidus A."/>
            <person name="Barry K."/>
            <person name="Detter J.C."/>
            <person name="Glavina del Rio T."/>
            <person name="Hammon N."/>
            <person name="Israni S."/>
            <person name="Dalin E."/>
            <person name="Tice H."/>
            <person name="Pitluck S."/>
            <person name="Sims D."/>
            <person name="Brettin T."/>
            <person name="Bruce D."/>
            <person name="Han C."/>
            <person name="Tapia R."/>
            <person name="Gilna P."/>
            <person name="Schmutz J."/>
            <person name="Larimer F."/>
            <person name="Land M."/>
            <person name="Hauser L."/>
            <person name="Kyrpides N."/>
            <person name="Mikhailova N."/>
            <person name="Oremland R.S."/>
            <person name="Hoeft S.E."/>
            <person name="Switzer-Blum J."/>
            <person name="Kulp T."/>
            <person name="King G."/>
            <person name="Tabita R."/>
            <person name="Witte B."/>
            <person name="Santini J.M."/>
            <person name="Basu P."/>
            <person name="Hollibaugh J.T."/>
            <person name="Xie G."/>
            <person name="Stolz J.F."/>
            <person name="Richardson P."/>
        </authorList>
    </citation>
    <scope>NUCLEOTIDE SEQUENCE [LARGE SCALE GENOMIC DNA]</scope>
    <source>
        <strain>ATCC BAA-1101 / DSM 17681 / MLHE-1</strain>
    </source>
</reference>
<sequence>MRWVLAGLTALLLWLQGLLWFGEGGLNDVRGLSRSVEAQREEVDRLRQRNQALEAEVNDLKTGLEALEERARSELGMIREGETFYQIIEREDDAR</sequence>
<gene>
    <name evidence="1" type="primary">ftsB</name>
    <name type="ordered locus">Mlg_1838</name>
</gene>
<accession>Q0A7K5</accession>
<comment type="function">
    <text evidence="1">Essential cell division protein. May link together the upstream cell division proteins, which are predominantly cytoplasmic, with the downstream cell division proteins, which are predominantly periplasmic.</text>
</comment>
<comment type="subunit">
    <text evidence="1">Part of a complex composed of FtsB, FtsL and FtsQ.</text>
</comment>
<comment type="subcellular location">
    <subcellularLocation>
        <location evidence="1">Cell inner membrane</location>
        <topology evidence="1">Single-pass type II membrane protein</topology>
    </subcellularLocation>
    <text evidence="1">Localizes to the division septum.</text>
</comment>
<comment type="similarity">
    <text evidence="1">Belongs to the FtsB family.</text>
</comment>
<organism>
    <name type="scientific">Alkalilimnicola ehrlichii (strain ATCC BAA-1101 / DSM 17681 / MLHE-1)</name>
    <dbReference type="NCBI Taxonomy" id="187272"/>
    <lineage>
        <taxon>Bacteria</taxon>
        <taxon>Pseudomonadati</taxon>
        <taxon>Pseudomonadota</taxon>
        <taxon>Gammaproteobacteria</taxon>
        <taxon>Chromatiales</taxon>
        <taxon>Ectothiorhodospiraceae</taxon>
        <taxon>Alkalilimnicola</taxon>
    </lineage>
</organism>
<proteinExistence type="inferred from homology"/>
<keyword id="KW-0131">Cell cycle</keyword>
<keyword id="KW-0132">Cell division</keyword>
<keyword id="KW-0997">Cell inner membrane</keyword>
<keyword id="KW-1003">Cell membrane</keyword>
<keyword id="KW-0175">Coiled coil</keyword>
<keyword id="KW-0472">Membrane</keyword>
<keyword id="KW-1185">Reference proteome</keyword>
<keyword id="KW-0812">Transmembrane</keyword>
<keyword id="KW-1133">Transmembrane helix</keyword>
<evidence type="ECO:0000255" key="1">
    <source>
        <dbReference type="HAMAP-Rule" id="MF_00599"/>
    </source>
</evidence>
<name>FTSB_ALKEH</name>